<name>CLD11_MACFA</name>
<proteinExistence type="evidence at transcript level"/>
<evidence type="ECO:0000250" key="1">
    <source>
        <dbReference type="UniProtKB" id="O75508"/>
    </source>
</evidence>
<evidence type="ECO:0000250" key="2">
    <source>
        <dbReference type="UniProtKB" id="Q60771"/>
    </source>
</evidence>
<evidence type="ECO:0000250" key="3">
    <source>
        <dbReference type="UniProtKB" id="Q99P82"/>
    </source>
</evidence>
<evidence type="ECO:0000255" key="4"/>
<evidence type="ECO:0000305" key="5"/>
<comment type="function">
    <text evidence="1">Plays a major role in tight junction-specific obliteration of the intercellular space, through calcium-independent cell-adhesion activity.</text>
</comment>
<comment type="subunit">
    <text evidence="1 2">Interacts with tetraspanin-3/TSPAN3. Interacts with OCLN.</text>
</comment>
<comment type="subcellular location">
    <subcellularLocation>
        <location evidence="1">Cell junction</location>
        <location evidence="1">Tight junction</location>
    </subcellularLocation>
    <subcellularLocation>
        <location evidence="1">Cell membrane</location>
        <topology evidence="4">Multi-pass membrane protein</topology>
    </subcellularLocation>
</comment>
<comment type="similarity">
    <text evidence="5">Belongs to the claudin family.</text>
</comment>
<keyword id="KW-0965">Cell junction</keyword>
<keyword id="KW-1003">Cell membrane</keyword>
<keyword id="KW-0472">Membrane</keyword>
<keyword id="KW-0597">Phosphoprotein</keyword>
<keyword id="KW-1185">Reference proteome</keyword>
<keyword id="KW-0796">Tight junction</keyword>
<keyword id="KW-0812">Transmembrane</keyword>
<keyword id="KW-1133">Transmembrane helix</keyword>
<organism>
    <name type="scientific">Macaca fascicularis</name>
    <name type="common">Crab-eating macaque</name>
    <name type="synonym">Cynomolgus monkey</name>
    <dbReference type="NCBI Taxonomy" id="9541"/>
    <lineage>
        <taxon>Eukaryota</taxon>
        <taxon>Metazoa</taxon>
        <taxon>Chordata</taxon>
        <taxon>Craniata</taxon>
        <taxon>Vertebrata</taxon>
        <taxon>Euteleostomi</taxon>
        <taxon>Mammalia</taxon>
        <taxon>Eutheria</taxon>
        <taxon>Euarchontoglires</taxon>
        <taxon>Primates</taxon>
        <taxon>Haplorrhini</taxon>
        <taxon>Catarrhini</taxon>
        <taxon>Cercopithecidae</taxon>
        <taxon>Cercopithecinae</taxon>
        <taxon>Macaca</taxon>
    </lineage>
</organism>
<accession>Q4R3L1</accession>
<dbReference type="EMBL" id="AB179255">
    <property type="protein sequence ID" value="BAE02306.1"/>
    <property type="molecule type" value="mRNA"/>
</dbReference>
<dbReference type="RefSeq" id="NP_001271695.1">
    <property type="nucleotide sequence ID" value="NM_001284766.1"/>
</dbReference>
<dbReference type="SMR" id="Q4R3L1"/>
<dbReference type="STRING" id="9541.ENSMFAP00000042770"/>
<dbReference type="Ensembl" id="ENSMFAT00000017054.2">
    <property type="protein sequence ID" value="ENSMFAP00000042770.1"/>
    <property type="gene ID" value="ENSMFAG00000040128.2"/>
</dbReference>
<dbReference type="VEuPathDB" id="HostDB:ENSMFAG00000040128"/>
<dbReference type="eggNOG" id="ENOG502QSDJ">
    <property type="taxonomic scope" value="Eukaryota"/>
</dbReference>
<dbReference type="GeneTree" id="ENSGT00890000139496"/>
<dbReference type="OMA" id="SYQDNNH"/>
<dbReference type="Proteomes" id="UP000233100">
    <property type="component" value="Chromosome 2"/>
</dbReference>
<dbReference type="Bgee" id="ENSMFAG00000040128">
    <property type="expression patterns" value="Expressed in frontal cortex and 4 other cell types or tissues"/>
</dbReference>
<dbReference type="GO" id="GO:0030424">
    <property type="term" value="C:axon"/>
    <property type="evidence" value="ECO:0007669"/>
    <property type="project" value="Ensembl"/>
</dbReference>
<dbReference type="GO" id="GO:0045178">
    <property type="term" value="C:basal part of cell"/>
    <property type="evidence" value="ECO:0007669"/>
    <property type="project" value="Ensembl"/>
</dbReference>
<dbReference type="GO" id="GO:0005923">
    <property type="term" value="C:bicellular tight junction"/>
    <property type="evidence" value="ECO:0007669"/>
    <property type="project" value="UniProtKB-SubCell"/>
</dbReference>
<dbReference type="GO" id="GO:0005811">
    <property type="term" value="C:lipid droplet"/>
    <property type="evidence" value="ECO:0007669"/>
    <property type="project" value="Ensembl"/>
</dbReference>
<dbReference type="GO" id="GO:0005883">
    <property type="term" value="C:neurofilament"/>
    <property type="evidence" value="ECO:0007669"/>
    <property type="project" value="Ensembl"/>
</dbReference>
<dbReference type="GO" id="GO:0005886">
    <property type="term" value="C:plasma membrane"/>
    <property type="evidence" value="ECO:0007669"/>
    <property type="project" value="UniProtKB-SubCell"/>
</dbReference>
<dbReference type="GO" id="GO:0042802">
    <property type="term" value="F:identical protein binding"/>
    <property type="evidence" value="ECO:0007669"/>
    <property type="project" value="Ensembl"/>
</dbReference>
<dbReference type="GO" id="GO:0005198">
    <property type="term" value="F:structural molecule activity"/>
    <property type="evidence" value="ECO:0007669"/>
    <property type="project" value="InterPro"/>
</dbReference>
<dbReference type="GO" id="GO:0008366">
    <property type="term" value="P:axon ensheathment"/>
    <property type="evidence" value="ECO:0007669"/>
    <property type="project" value="Ensembl"/>
</dbReference>
<dbReference type="GO" id="GO:0007155">
    <property type="term" value="P:cell adhesion"/>
    <property type="evidence" value="ECO:0007669"/>
    <property type="project" value="Ensembl"/>
</dbReference>
<dbReference type="GO" id="GO:0007283">
    <property type="term" value="P:spermatogenesis"/>
    <property type="evidence" value="ECO:0007669"/>
    <property type="project" value="Ensembl"/>
</dbReference>
<dbReference type="GO" id="GO:0120192">
    <property type="term" value="P:tight junction assembly"/>
    <property type="evidence" value="ECO:0007669"/>
    <property type="project" value="Ensembl"/>
</dbReference>
<dbReference type="FunFam" id="1.20.140.150:FF:000015">
    <property type="entry name" value="Claudin"/>
    <property type="match status" value="1"/>
</dbReference>
<dbReference type="Gene3D" id="1.20.140.150">
    <property type="match status" value="1"/>
</dbReference>
<dbReference type="InterPro" id="IPR006187">
    <property type="entry name" value="Claudin"/>
</dbReference>
<dbReference type="InterPro" id="IPR003555">
    <property type="entry name" value="Claudin11"/>
</dbReference>
<dbReference type="InterPro" id="IPR017974">
    <property type="entry name" value="Claudin_CS"/>
</dbReference>
<dbReference type="InterPro" id="IPR004031">
    <property type="entry name" value="PMP22/EMP/MP20/Claudin"/>
</dbReference>
<dbReference type="PANTHER" id="PTHR12002">
    <property type="entry name" value="CLAUDIN"/>
    <property type="match status" value="1"/>
</dbReference>
<dbReference type="Pfam" id="PF00822">
    <property type="entry name" value="PMP22_Claudin"/>
    <property type="match status" value="1"/>
</dbReference>
<dbReference type="PRINTS" id="PR01077">
    <property type="entry name" value="CLAUDIN"/>
</dbReference>
<dbReference type="PRINTS" id="PR01384">
    <property type="entry name" value="CLAUDIN11"/>
</dbReference>
<dbReference type="PROSITE" id="PS01346">
    <property type="entry name" value="CLAUDIN"/>
    <property type="match status" value="1"/>
</dbReference>
<sequence length="207" mass="22004">MVATCLQVVGFVTSFVGWIGVIVTTSTNDWVVTCGYTIPTCRKLDELGSKGLWADCVMATGLYHCKPLVDILILPGYVQACRALMIAASVLGLPAILLLLTVLPCIRMGHEPGVAKYRRAQLAGVLLILLALCAIVATIWFPVCAHRETTIVSFGYSLYAGWIGAVLCLVGGCVILCCAGDAQAFGENRFYYSSGSSSPTHAKSAHV</sequence>
<feature type="chain" id="PRO_0000144761" description="Claudin-11">
    <location>
        <begin position="1"/>
        <end position="207"/>
    </location>
</feature>
<feature type="topological domain" description="Cytoplasmic" evidence="4">
    <location>
        <position position="1"/>
    </location>
</feature>
<feature type="transmembrane region" description="Helical" evidence="4">
    <location>
        <begin position="2"/>
        <end position="22"/>
    </location>
</feature>
<feature type="topological domain" description="Extracellular" evidence="4">
    <location>
        <begin position="23"/>
        <end position="82"/>
    </location>
</feature>
<feature type="transmembrane region" description="Helical" evidence="4">
    <location>
        <begin position="83"/>
        <end position="103"/>
    </location>
</feature>
<feature type="topological domain" description="Cytoplasmic" evidence="4">
    <location>
        <begin position="104"/>
        <end position="122"/>
    </location>
</feature>
<feature type="transmembrane region" description="Helical" evidence="4">
    <location>
        <begin position="123"/>
        <end position="143"/>
    </location>
</feature>
<feature type="topological domain" description="Extracellular" evidence="4">
    <location>
        <begin position="144"/>
        <end position="157"/>
    </location>
</feature>
<feature type="transmembrane region" description="Helical" evidence="4">
    <location>
        <begin position="158"/>
        <end position="178"/>
    </location>
</feature>
<feature type="topological domain" description="Cytoplasmic" evidence="4">
    <location>
        <begin position="179"/>
        <end position="207"/>
    </location>
</feature>
<feature type="modified residue" description="Phosphoserine" evidence="3">
    <location>
        <position position="193"/>
    </location>
</feature>
<feature type="modified residue" description="Phosphoserine" evidence="2">
    <location>
        <position position="194"/>
    </location>
</feature>
<feature type="modified residue" description="Phosphoserine" evidence="2">
    <location>
        <position position="197"/>
    </location>
</feature>
<feature type="modified residue" description="Phosphoserine" evidence="2">
    <location>
        <position position="198"/>
    </location>
</feature>
<gene>
    <name type="primary">CLDN11</name>
    <name type="ORF">QtsA-16119</name>
</gene>
<reference key="1">
    <citation type="submission" date="2005-06" db="EMBL/GenBank/DDBJ databases">
        <title>DNA sequences of macaque genes expressed in brain or testis and its evolutionary implications.</title>
        <authorList>
            <consortium name="International consortium for macaque cDNA sequencing and analysis"/>
        </authorList>
    </citation>
    <scope>NUCLEOTIDE SEQUENCE [LARGE SCALE MRNA]</scope>
    <source>
        <tissue>Testis</tissue>
    </source>
</reference>
<protein>
    <recommendedName>
        <fullName>Claudin-11</fullName>
    </recommendedName>
</protein>